<accession>P81214</accession>
<proteinExistence type="evidence at protein level"/>
<comment type="function">
    <text>Hydrolysis of proteins with a broad specificity. Residues recognized to be cleaved were primarily those of trypsin and chymotrypsin and Lys was the most susceptible.</text>
</comment>
<comment type="subunit">
    <text>Monomer.</text>
</comment>
<comment type="similarity">
    <text evidence="4">Belongs to the peptidase A1 family.</text>
</comment>
<name>CARP_SYNRA</name>
<protein>
    <recommendedName>
        <fullName>Syncephapepsin</fullName>
        <ecNumber>3.4.23.-</ecNumber>
    </recommendedName>
</protein>
<organism>
    <name type="scientific">Syncephalastrum racemosum</name>
    <name type="common">Filamentous fungus</name>
    <dbReference type="NCBI Taxonomy" id="13706"/>
    <lineage>
        <taxon>Eukaryota</taxon>
        <taxon>Fungi</taxon>
        <taxon>Fungi incertae sedis</taxon>
        <taxon>Mucoromycota</taxon>
        <taxon>Mucoromycotina</taxon>
        <taxon>Mucoromycetes</taxon>
        <taxon>Mucorales</taxon>
        <taxon>Syncephalastraceae</taxon>
        <taxon>Syncephalastrum</taxon>
    </lineage>
</organism>
<keyword id="KW-0064">Aspartyl protease</keyword>
<keyword id="KW-0903">Direct protein sequencing</keyword>
<keyword id="KW-1015">Disulfide bond</keyword>
<keyword id="KW-0378">Hydrolase</keyword>
<keyword id="KW-0645">Protease</keyword>
<keyword id="KW-0732">Signal</keyword>
<keyword id="KW-0865">Zymogen</keyword>
<feature type="signal peptide" evidence="1">
    <location>
        <begin position="1"/>
        <end position="19"/>
    </location>
</feature>
<feature type="propeptide" id="PRO_0000025897" description="Activation peptide" evidence="1">
    <location>
        <begin position="20"/>
        <end position="71"/>
    </location>
</feature>
<feature type="chain" id="PRO_0000025898" description="Syncephapepsin">
    <location>
        <begin position="72"/>
        <end position="395"/>
    </location>
</feature>
<feature type="domain" description="Peptidase A1" evidence="2">
    <location>
        <begin position="89"/>
        <end position="391"/>
    </location>
</feature>
<feature type="active site" evidence="3">
    <location>
        <position position="107"/>
    </location>
</feature>
<feature type="active site" evidence="3">
    <location>
        <position position="288"/>
    </location>
</feature>
<feature type="disulfide bond">
    <location>
        <begin position="120"/>
        <end position="123"/>
    </location>
</feature>
<feature type="disulfide bond">
    <location>
        <begin position="322"/>
        <end position="355"/>
    </location>
</feature>
<evidence type="ECO:0000255" key="1"/>
<evidence type="ECO:0000255" key="2">
    <source>
        <dbReference type="PROSITE-ProRule" id="PRU01103"/>
    </source>
</evidence>
<evidence type="ECO:0000255" key="3">
    <source>
        <dbReference type="PROSITE-ProRule" id="PRU10094"/>
    </source>
</evidence>
<evidence type="ECO:0000305" key="4"/>
<dbReference type="EC" id="3.4.23.-"/>
<dbReference type="EMBL" id="AF043552">
    <property type="protein sequence ID" value="AAC69517.1"/>
    <property type="molecule type" value="mRNA"/>
</dbReference>
<dbReference type="SMR" id="P81214"/>
<dbReference type="MEROPS" id="A01.042"/>
<dbReference type="GO" id="GO:0004190">
    <property type="term" value="F:aspartic-type endopeptidase activity"/>
    <property type="evidence" value="ECO:0007669"/>
    <property type="project" value="UniProtKB-KW"/>
</dbReference>
<dbReference type="GO" id="GO:0006508">
    <property type="term" value="P:proteolysis"/>
    <property type="evidence" value="ECO:0007669"/>
    <property type="project" value="UniProtKB-KW"/>
</dbReference>
<dbReference type="FunFam" id="2.40.70.10:FF:000008">
    <property type="entry name" value="Cathepsin D"/>
    <property type="match status" value="1"/>
</dbReference>
<dbReference type="Gene3D" id="2.40.70.10">
    <property type="entry name" value="Acid Proteases"/>
    <property type="match status" value="2"/>
</dbReference>
<dbReference type="InterPro" id="IPR001461">
    <property type="entry name" value="Aspartic_peptidase_A1"/>
</dbReference>
<dbReference type="InterPro" id="IPR001969">
    <property type="entry name" value="Aspartic_peptidase_AS"/>
</dbReference>
<dbReference type="InterPro" id="IPR033121">
    <property type="entry name" value="PEPTIDASE_A1"/>
</dbReference>
<dbReference type="InterPro" id="IPR021109">
    <property type="entry name" value="Peptidase_aspartic_dom_sf"/>
</dbReference>
<dbReference type="PANTHER" id="PTHR47966:SF1">
    <property type="entry name" value="ASPARTYL PROTEINASE"/>
    <property type="match status" value="1"/>
</dbReference>
<dbReference type="PANTHER" id="PTHR47966">
    <property type="entry name" value="BETA-SITE APP-CLEAVING ENZYME, ISOFORM A-RELATED"/>
    <property type="match status" value="1"/>
</dbReference>
<dbReference type="Pfam" id="PF00026">
    <property type="entry name" value="Asp"/>
    <property type="match status" value="1"/>
</dbReference>
<dbReference type="PRINTS" id="PR00792">
    <property type="entry name" value="PEPSIN"/>
</dbReference>
<dbReference type="SUPFAM" id="SSF50630">
    <property type="entry name" value="Acid proteases"/>
    <property type="match status" value="1"/>
</dbReference>
<dbReference type="PROSITE" id="PS00141">
    <property type="entry name" value="ASP_PROTEASE"/>
    <property type="match status" value="2"/>
</dbReference>
<dbReference type="PROSITE" id="PS51767">
    <property type="entry name" value="PEPTIDASE_A1"/>
    <property type="match status" value="1"/>
</dbReference>
<gene>
    <name type="primary">SPSR</name>
</gene>
<sequence length="395" mass="41388">MKFSLALLATVALATISQAAPVEKQVAGKPFQLVKNPHYQANATRAIFRAEKKYARHTAIPEQGKTIVKSAASGTGSVPMTDVDYDVEYYATVSVGTPAQSIKLDFDTGSSDLWFSSTLCTSCGSKSFDPTKSSTYKKVGKSWQISYGDGSSASGITATDNVELGGLKITGQTIELATRESSSFSSGAIDGILGLGFDTISTVAGTKTPVDNLISQNLISKPIFGVWLGKQSEGGGGEYVFGGYNTDHIDGSLTTVKVDNSQGWYGVTVSGLKVGSKSVASSFDGILDTGTTLLIFDQATGSKVAAAYGAKDNGDGTYTISCDQSKLQPLALTMGGKDFFVPADSLIYVKQGSQCIAGFGYSSMDFAIIGDTFLKNNYVVFNQGVPEVQIAPSKA</sequence>
<reference key="1">
    <citation type="submission" date="1998-01" db="EMBL/GenBank/DDBJ databases">
        <title>Amino-acid sequence and gene cloning of syncephapepsin from Syncephalastrum racemosum.</title>
        <authorList>
            <person name="Ho H.-C."/>
            <person name="Shiau P.-F."/>
            <person name="Liao J.-M."/>
            <person name="Chung J.-G."/>
        </authorList>
    </citation>
    <scope>NUCLEOTIDE SEQUENCE [MRNA]</scope>
    <scope>PROTEIN SEQUENCE OF 72-395</scope>
</reference>
<reference key="2">
    <citation type="journal article" date="1996" name="Arch. Biochem. Biophys.">
        <title>Identification of a fungal protein of Syncephalastrum racemosum as aspartic proteinase.</title>
        <authorList>
            <person name="Ho H.-C."/>
            <person name="Chen L.-Y."/>
            <person name="Liao T.H."/>
        </authorList>
    </citation>
    <scope>PARTIAL PROTEIN SEQUENCE</scope>
</reference>
<reference key="3">
    <citation type="journal article" date="1998" name="Protein Expr. Purif.">
        <title>Single-column purification of syncephapepsin -- an aspartic proteinase from Syncephalastrum racemosum.</title>
        <authorList>
            <person name="Ho H.-C."/>
            <person name="Shiau P.F."/>
            <person name="Wu S.L."/>
        </authorList>
    </citation>
    <scope>CHARACTERIZATION</scope>
</reference>